<name>ACSA_GEMAT</name>
<comment type="function">
    <text evidence="1">Catalyzes the conversion of acetate into acetyl-CoA (AcCoA), an essential intermediate at the junction of anabolic and catabolic pathways. AcsA undergoes a two-step reaction. In the first half reaction, AcsA combines acetate with ATP to form acetyl-adenylate (AcAMP) intermediate. In the second half reaction, it can then transfer the acetyl group from AcAMP to the sulfhydryl group of CoA, forming the product AcCoA.</text>
</comment>
<comment type="catalytic activity">
    <reaction evidence="1">
        <text>acetate + ATP + CoA = acetyl-CoA + AMP + diphosphate</text>
        <dbReference type="Rhea" id="RHEA:23176"/>
        <dbReference type="ChEBI" id="CHEBI:30089"/>
        <dbReference type="ChEBI" id="CHEBI:30616"/>
        <dbReference type="ChEBI" id="CHEBI:33019"/>
        <dbReference type="ChEBI" id="CHEBI:57287"/>
        <dbReference type="ChEBI" id="CHEBI:57288"/>
        <dbReference type="ChEBI" id="CHEBI:456215"/>
        <dbReference type="EC" id="6.2.1.1"/>
    </reaction>
</comment>
<comment type="cofactor">
    <cofactor evidence="1">
        <name>Mg(2+)</name>
        <dbReference type="ChEBI" id="CHEBI:18420"/>
    </cofactor>
</comment>
<comment type="PTM">
    <text evidence="1">Acetylated. Deacetylation by the SIR2-homolog deacetylase activates the enzyme.</text>
</comment>
<comment type="similarity">
    <text evidence="1">Belongs to the ATP-dependent AMP-binding enzyme family.</text>
</comment>
<sequence>MSDIDVLLQETRTFPPSEEFRAGAWVRDNALREAAAADPVGFWAKESEALDWMTPWSTALEWEPPRAKWFQGGTLNASVNCIDRHVHGPRRNKAALIWEGEPGDRRTFTYWDLYREVNLAANMLKKLGVGRGDRVAIYLPMIPEAVIAMLACARIGAIHTVVFGGFAPESLRDRINDCGCKLLITADGGSRRGQMVPLKRNADVALKECPSIENVLVVMRRRSGVGDETFAEMQEGRDHWWHRLKRQVPRYCEPEAMDAEDVLFVLYTSGTTGKPKGIVHTTGGFLTGVATTTKYTFDLKEEDVYWCTADIGWITGHSYLVYGPLANGATCVMYEGAPDWPDKDRFWQICERYGVTILYTAPTAIRAFMKWGTEYVKKHDLSQLRVLGSVGEPINPEAWMWYHEHIGDFQCPIVDTWWQTETGAIMITPLPGVTTTKPGSATVPFPGIRTALLDANANELTVGGGLLAITHPWPSMLRTIWGDDQRYVDTYFSKWPGRPDLYFPGDGAKLDEDGYLWILGRVDDVLNVSGHRIGTMEVESALVDHPSVAEAAVVGKHHDLKGQAIAAFVTLRAGFTASGSLRDELRDHVAQKIGALARPDDILFSADLPKTRSGKIMRRLLRDIAEGRALGDTTTLADPSVVASLKDQYEAQES</sequence>
<gene>
    <name evidence="1" type="primary">acsA</name>
    <name type="ordered locus">GAU_2600</name>
</gene>
<evidence type="ECO:0000255" key="1">
    <source>
        <dbReference type="HAMAP-Rule" id="MF_01123"/>
    </source>
</evidence>
<organism>
    <name type="scientific">Gemmatimonas aurantiaca (strain DSM 14586 / JCM 11422 / NBRC 100505 / T-27)</name>
    <dbReference type="NCBI Taxonomy" id="379066"/>
    <lineage>
        <taxon>Bacteria</taxon>
        <taxon>Pseudomonadati</taxon>
        <taxon>Gemmatimonadota</taxon>
        <taxon>Gemmatimonadia</taxon>
        <taxon>Gemmatimonadales</taxon>
        <taxon>Gemmatimonadaceae</taxon>
        <taxon>Gemmatimonas</taxon>
    </lineage>
</organism>
<feature type="chain" id="PRO_1000213621" description="Acetyl-coenzyme A synthetase">
    <location>
        <begin position="1"/>
        <end position="654"/>
    </location>
</feature>
<feature type="binding site" evidence="1">
    <location>
        <begin position="191"/>
        <end position="194"/>
    </location>
    <ligand>
        <name>CoA</name>
        <dbReference type="ChEBI" id="CHEBI:57287"/>
    </ligand>
</feature>
<feature type="binding site" evidence="1">
    <location>
        <position position="315"/>
    </location>
    <ligand>
        <name>CoA</name>
        <dbReference type="ChEBI" id="CHEBI:57287"/>
    </ligand>
</feature>
<feature type="binding site" evidence="1">
    <location>
        <begin position="391"/>
        <end position="393"/>
    </location>
    <ligand>
        <name>ATP</name>
        <dbReference type="ChEBI" id="CHEBI:30616"/>
    </ligand>
</feature>
<feature type="binding site" evidence="1">
    <location>
        <begin position="415"/>
        <end position="420"/>
    </location>
    <ligand>
        <name>ATP</name>
        <dbReference type="ChEBI" id="CHEBI:30616"/>
    </ligand>
</feature>
<feature type="binding site" evidence="1">
    <location>
        <position position="506"/>
    </location>
    <ligand>
        <name>ATP</name>
        <dbReference type="ChEBI" id="CHEBI:30616"/>
    </ligand>
</feature>
<feature type="binding site" evidence="1">
    <location>
        <position position="521"/>
    </location>
    <ligand>
        <name>ATP</name>
        <dbReference type="ChEBI" id="CHEBI:30616"/>
    </ligand>
</feature>
<feature type="binding site" evidence="1">
    <location>
        <position position="529"/>
    </location>
    <ligand>
        <name>CoA</name>
        <dbReference type="ChEBI" id="CHEBI:57287"/>
    </ligand>
</feature>
<feature type="binding site" evidence="1">
    <location>
        <position position="532"/>
    </location>
    <ligand>
        <name>ATP</name>
        <dbReference type="ChEBI" id="CHEBI:30616"/>
    </ligand>
</feature>
<feature type="binding site" evidence="1">
    <location>
        <position position="543"/>
    </location>
    <ligand>
        <name>Mg(2+)</name>
        <dbReference type="ChEBI" id="CHEBI:18420"/>
    </ligand>
</feature>
<feature type="binding site" evidence="1">
    <location>
        <position position="545"/>
    </location>
    <ligand>
        <name>Mg(2+)</name>
        <dbReference type="ChEBI" id="CHEBI:18420"/>
    </ligand>
</feature>
<feature type="binding site" evidence="1">
    <location>
        <position position="548"/>
    </location>
    <ligand>
        <name>Mg(2+)</name>
        <dbReference type="ChEBI" id="CHEBI:18420"/>
    </ligand>
</feature>
<feature type="modified residue" description="N6-acetyllysine" evidence="1">
    <location>
        <position position="615"/>
    </location>
</feature>
<accession>C1AA44</accession>
<proteinExistence type="inferred from homology"/>
<protein>
    <recommendedName>
        <fullName evidence="1">Acetyl-coenzyme A synthetase</fullName>
        <shortName evidence="1">AcCoA synthetase</shortName>
        <shortName evidence="1">Acs</shortName>
        <ecNumber evidence="1">6.2.1.1</ecNumber>
    </recommendedName>
    <alternativeName>
        <fullName evidence="1">Acetate--CoA ligase</fullName>
    </alternativeName>
    <alternativeName>
        <fullName evidence="1">Acyl-activating enzyme</fullName>
    </alternativeName>
</protein>
<reference key="1">
    <citation type="submission" date="2006-03" db="EMBL/GenBank/DDBJ databases">
        <title>Complete genome sequence of Gemmatimonas aurantiaca T-27 that represents a novel phylum Gemmatimonadetes.</title>
        <authorList>
            <person name="Takasaki K."/>
            <person name="Ichikawa N."/>
            <person name="Miura H."/>
            <person name="Matsushita S."/>
            <person name="Watanabe Y."/>
            <person name="Oguchi A."/>
            <person name="Ankai A."/>
            <person name="Yashiro I."/>
            <person name="Takahashi M."/>
            <person name="Terui Y."/>
            <person name="Fukui S."/>
            <person name="Yokoyama H."/>
            <person name="Tanikawa S."/>
            <person name="Hanada S."/>
            <person name="Kamagata Y."/>
            <person name="Fujita N."/>
        </authorList>
    </citation>
    <scope>NUCLEOTIDE SEQUENCE [LARGE SCALE GENOMIC DNA]</scope>
    <source>
        <strain>DSM 14586 / JCM 11422 / NBRC 100505 / T-27</strain>
    </source>
</reference>
<dbReference type="EC" id="6.2.1.1" evidence="1"/>
<dbReference type="EMBL" id="AP009153">
    <property type="protein sequence ID" value="BAH39642.1"/>
    <property type="molecule type" value="Genomic_DNA"/>
</dbReference>
<dbReference type="RefSeq" id="WP_015894411.1">
    <property type="nucleotide sequence ID" value="NC_012489.1"/>
</dbReference>
<dbReference type="SMR" id="C1AA44"/>
<dbReference type="STRING" id="379066.GAU_2600"/>
<dbReference type="KEGG" id="gau:GAU_2600"/>
<dbReference type="eggNOG" id="COG0365">
    <property type="taxonomic scope" value="Bacteria"/>
</dbReference>
<dbReference type="HOGENOM" id="CLU_000022_3_6_0"/>
<dbReference type="OrthoDB" id="9801302at2"/>
<dbReference type="Proteomes" id="UP000002209">
    <property type="component" value="Chromosome"/>
</dbReference>
<dbReference type="GO" id="GO:0005829">
    <property type="term" value="C:cytosol"/>
    <property type="evidence" value="ECO:0007669"/>
    <property type="project" value="TreeGrafter"/>
</dbReference>
<dbReference type="GO" id="GO:0003987">
    <property type="term" value="F:acetate-CoA ligase activity"/>
    <property type="evidence" value="ECO:0007669"/>
    <property type="project" value="UniProtKB-UniRule"/>
</dbReference>
<dbReference type="GO" id="GO:0016208">
    <property type="term" value="F:AMP binding"/>
    <property type="evidence" value="ECO:0007669"/>
    <property type="project" value="InterPro"/>
</dbReference>
<dbReference type="GO" id="GO:0005524">
    <property type="term" value="F:ATP binding"/>
    <property type="evidence" value="ECO:0007669"/>
    <property type="project" value="UniProtKB-KW"/>
</dbReference>
<dbReference type="GO" id="GO:0046872">
    <property type="term" value="F:metal ion binding"/>
    <property type="evidence" value="ECO:0007669"/>
    <property type="project" value="UniProtKB-KW"/>
</dbReference>
<dbReference type="GO" id="GO:0019427">
    <property type="term" value="P:acetyl-CoA biosynthetic process from acetate"/>
    <property type="evidence" value="ECO:0007669"/>
    <property type="project" value="InterPro"/>
</dbReference>
<dbReference type="CDD" id="cd05966">
    <property type="entry name" value="ACS"/>
    <property type="match status" value="1"/>
</dbReference>
<dbReference type="FunFam" id="3.40.50.12780:FF:000001">
    <property type="entry name" value="Acetyl-coenzyme A synthetase"/>
    <property type="match status" value="1"/>
</dbReference>
<dbReference type="Gene3D" id="3.30.300.30">
    <property type="match status" value="1"/>
</dbReference>
<dbReference type="Gene3D" id="3.40.50.12780">
    <property type="entry name" value="N-terminal domain of ligase-like"/>
    <property type="match status" value="1"/>
</dbReference>
<dbReference type="HAMAP" id="MF_01123">
    <property type="entry name" value="Ac_CoA_synth"/>
    <property type="match status" value="1"/>
</dbReference>
<dbReference type="InterPro" id="IPR011904">
    <property type="entry name" value="Ac_CoA_lig"/>
</dbReference>
<dbReference type="InterPro" id="IPR032387">
    <property type="entry name" value="ACAS_N"/>
</dbReference>
<dbReference type="InterPro" id="IPR025110">
    <property type="entry name" value="AMP-bd_C"/>
</dbReference>
<dbReference type="InterPro" id="IPR045851">
    <property type="entry name" value="AMP-bd_C_sf"/>
</dbReference>
<dbReference type="InterPro" id="IPR020845">
    <property type="entry name" value="AMP-binding_CS"/>
</dbReference>
<dbReference type="InterPro" id="IPR000873">
    <property type="entry name" value="AMP-dep_synth/lig_dom"/>
</dbReference>
<dbReference type="InterPro" id="IPR042099">
    <property type="entry name" value="ANL_N_sf"/>
</dbReference>
<dbReference type="NCBIfam" id="TIGR02188">
    <property type="entry name" value="Ac_CoA_lig_AcsA"/>
    <property type="match status" value="1"/>
</dbReference>
<dbReference type="NCBIfam" id="NF001208">
    <property type="entry name" value="PRK00174.1"/>
    <property type="match status" value="1"/>
</dbReference>
<dbReference type="PANTHER" id="PTHR24095">
    <property type="entry name" value="ACETYL-COENZYME A SYNTHETASE"/>
    <property type="match status" value="1"/>
</dbReference>
<dbReference type="PANTHER" id="PTHR24095:SF14">
    <property type="entry name" value="ACETYL-COENZYME A SYNTHETASE 1"/>
    <property type="match status" value="1"/>
</dbReference>
<dbReference type="Pfam" id="PF16177">
    <property type="entry name" value="ACAS_N"/>
    <property type="match status" value="1"/>
</dbReference>
<dbReference type="Pfam" id="PF00501">
    <property type="entry name" value="AMP-binding"/>
    <property type="match status" value="1"/>
</dbReference>
<dbReference type="Pfam" id="PF13193">
    <property type="entry name" value="AMP-binding_C"/>
    <property type="match status" value="1"/>
</dbReference>
<dbReference type="SUPFAM" id="SSF56801">
    <property type="entry name" value="Acetyl-CoA synthetase-like"/>
    <property type="match status" value="1"/>
</dbReference>
<dbReference type="PROSITE" id="PS00455">
    <property type="entry name" value="AMP_BINDING"/>
    <property type="match status" value="1"/>
</dbReference>
<keyword id="KW-0007">Acetylation</keyword>
<keyword id="KW-0067">ATP-binding</keyword>
<keyword id="KW-0436">Ligase</keyword>
<keyword id="KW-0460">Magnesium</keyword>
<keyword id="KW-0479">Metal-binding</keyword>
<keyword id="KW-0547">Nucleotide-binding</keyword>
<keyword id="KW-1185">Reference proteome</keyword>